<proteinExistence type="inferred from homology"/>
<name>RPOZ_PSEF5</name>
<accession>Q4K3R3</accession>
<feature type="chain" id="PRO_0000237490" description="DNA-directed RNA polymerase subunit omega">
    <location>
        <begin position="1"/>
        <end position="87"/>
    </location>
</feature>
<keyword id="KW-0240">DNA-directed RNA polymerase</keyword>
<keyword id="KW-0548">Nucleotidyltransferase</keyword>
<keyword id="KW-0804">Transcription</keyword>
<keyword id="KW-0808">Transferase</keyword>
<organism>
    <name type="scientific">Pseudomonas fluorescens (strain ATCC BAA-477 / NRRL B-23932 / Pf-5)</name>
    <dbReference type="NCBI Taxonomy" id="220664"/>
    <lineage>
        <taxon>Bacteria</taxon>
        <taxon>Pseudomonadati</taxon>
        <taxon>Pseudomonadota</taxon>
        <taxon>Gammaproteobacteria</taxon>
        <taxon>Pseudomonadales</taxon>
        <taxon>Pseudomonadaceae</taxon>
        <taxon>Pseudomonas</taxon>
    </lineage>
</organism>
<protein>
    <recommendedName>
        <fullName evidence="1">DNA-directed RNA polymerase subunit omega</fullName>
        <shortName evidence="1">RNAP omega subunit</shortName>
        <ecNumber evidence="1">2.7.7.6</ecNumber>
    </recommendedName>
    <alternativeName>
        <fullName evidence="1">RNA polymerase omega subunit</fullName>
    </alternativeName>
    <alternativeName>
        <fullName evidence="1">Transcriptase subunit omega</fullName>
    </alternativeName>
</protein>
<comment type="function">
    <text evidence="1">Promotes RNA polymerase assembly. Latches the N- and C-terminal regions of the beta' subunit thereby facilitating its interaction with the beta and alpha subunits.</text>
</comment>
<comment type="catalytic activity">
    <reaction evidence="1">
        <text>RNA(n) + a ribonucleoside 5'-triphosphate = RNA(n+1) + diphosphate</text>
        <dbReference type="Rhea" id="RHEA:21248"/>
        <dbReference type="Rhea" id="RHEA-COMP:14527"/>
        <dbReference type="Rhea" id="RHEA-COMP:17342"/>
        <dbReference type="ChEBI" id="CHEBI:33019"/>
        <dbReference type="ChEBI" id="CHEBI:61557"/>
        <dbReference type="ChEBI" id="CHEBI:140395"/>
        <dbReference type="EC" id="2.7.7.6"/>
    </reaction>
</comment>
<comment type="subunit">
    <text evidence="1">The RNAP catalytic core consists of 2 alpha, 1 beta, 1 beta' and 1 omega subunit. When a sigma factor is associated with the core the holoenzyme is formed, which can initiate transcription.</text>
</comment>
<comment type="similarity">
    <text evidence="1">Belongs to the RNA polymerase subunit omega family.</text>
</comment>
<sequence length="87" mass="9676">MARVTVEDCLEHVDNRFELVMLSTKRARQLATGGKEPKVAWENDKPTVVALREIAEGLIDYAAIAEAEIVEDEPLFAAFEDESNEAV</sequence>
<reference key="1">
    <citation type="journal article" date="2005" name="Nat. Biotechnol.">
        <title>Complete genome sequence of the plant commensal Pseudomonas fluorescens Pf-5.</title>
        <authorList>
            <person name="Paulsen I.T."/>
            <person name="Press C.M."/>
            <person name="Ravel J."/>
            <person name="Kobayashi D.Y."/>
            <person name="Myers G.S.A."/>
            <person name="Mavrodi D.V."/>
            <person name="DeBoy R.T."/>
            <person name="Seshadri R."/>
            <person name="Ren Q."/>
            <person name="Madupu R."/>
            <person name="Dodson R.J."/>
            <person name="Durkin A.S."/>
            <person name="Brinkac L.M."/>
            <person name="Daugherty S.C."/>
            <person name="Sullivan S.A."/>
            <person name="Rosovitz M.J."/>
            <person name="Gwinn M.L."/>
            <person name="Zhou L."/>
            <person name="Schneider D.J."/>
            <person name="Cartinhour S.W."/>
            <person name="Nelson W.C."/>
            <person name="Weidman J."/>
            <person name="Watkins K."/>
            <person name="Tran K."/>
            <person name="Khouri H."/>
            <person name="Pierson E.A."/>
            <person name="Pierson L.S. III"/>
            <person name="Thomashow L.S."/>
            <person name="Loper J.E."/>
        </authorList>
    </citation>
    <scope>NUCLEOTIDE SEQUENCE [LARGE SCALE GENOMIC DNA]</scope>
    <source>
        <strain>ATCC BAA-477 / NRRL B-23932 / Pf-5</strain>
    </source>
</reference>
<evidence type="ECO:0000255" key="1">
    <source>
        <dbReference type="HAMAP-Rule" id="MF_00366"/>
    </source>
</evidence>
<dbReference type="EC" id="2.7.7.6" evidence="1"/>
<dbReference type="EMBL" id="CP000076">
    <property type="protein sequence ID" value="AAY95250.2"/>
    <property type="molecule type" value="Genomic_DNA"/>
</dbReference>
<dbReference type="RefSeq" id="WP_007921129.1">
    <property type="nucleotide sequence ID" value="NC_004129.6"/>
</dbReference>
<dbReference type="SMR" id="Q4K3R3"/>
<dbReference type="STRING" id="220664.PFL_6062"/>
<dbReference type="GeneID" id="93400406"/>
<dbReference type="KEGG" id="pfl:PFL_6062"/>
<dbReference type="eggNOG" id="COG1758">
    <property type="taxonomic scope" value="Bacteria"/>
</dbReference>
<dbReference type="HOGENOM" id="CLU_125406_5_2_6"/>
<dbReference type="Proteomes" id="UP000008540">
    <property type="component" value="Chromosome"/>
</dbReference>
<dbReference type="GO" id="GO:0000428">
    <property type="term" value="C:DNA-directed RNA polymerase complex"/>
    <property type="evidence" value="ECO:0007669"/>
    <property type="project" value="UniProtKB-KW"/>
</dbReference>
<dbReference type="GO" id="GO:0003677">
    <property type="term" value="F:DNA binding"/>
    <property type="evidence" value="ECO:0007669"/>
    <property type="project" value="UniProtKB-UniRule"/>
</dbReference>
<dbReference type="GO" id="GO:0003899">
    <property type="term" value="F:DNA-directed RNA polymerase activity"/>
    <property type="evidence" value="ECO:0007669"/>
    <property type="project" value="UniProtKB-UniRule"/>
</dbReference>
<dbReference type="GO" id="GO:0006351">
    <property type="term" value="P:DNA-templated transcription"/>
    <property type="evidence" value="ECO:0007669"/>
    <property type="project" value="UniProtKB-UniRule"/>
</dbReference>
<dbReference type="Gene3D" id="3.90.940.10">
    <property type="match status" value="1"/>
</dbReference>
<dbReference type="HAMAP" id="MF_00366">
    <property type="entry name" value="RNApol_bact_RpoZ"/>
    <property type="match status" value="1"/>
</dbReference>
<dbReference type="InterPro" id="IPR003716">
    <property type="entry name" value="DNA-dir_RNA_pol_omega"/>
</dbReference>
<dbReference type="InterPro" id="IPR006110">
    <property type="entry name" value="Pol_omega/Rpo6/RPB6"/>
</dbReference>
<dbReference type="InterPro" id="IPR036161">
    <property type="entry name" value="RPB6/omega-like_sf"/>
</dbReference>
<dbReference type="NCBIfam" id="TIGR00690">
    <property type="entry name" value="rpoZ"/>
    <property type="match status" value="1"/>
</dbReference>
<dbReference type="PANTHER" id="PTHR34476">
    <property type="entry name" value="DNA-DIRECTED RNA POLYMERASE SUBUNIT OMEGA"/>
    <property type="match status" value="1"/>
</dbReference>
<dbReference type="PANTHER" id="PTHR34476:SF1">
    <property type="entry name" value="DNA-DIRECTED RNA POLYMERASE SUBUNIT OMEGA"/>
    <property type="match status" value="1"/>
</dbReference>
<dbReference type="Pfam" id="PF01192">
    <property type="entry name" value="RNA_pol_Rpb6"/>
    <property type="match status" value="1"/>
</dbReference>
<dbReference type="SMART" id="SM01409">
    <property type="entry name" value="RNA_pol_Rpb6"/>
    <property type="match status" value="1"/>
</dbReference>
<dbReference type="SUPFAM" id="SSF63562">
    <property type="entry name" value="RPB6/omega subunit-like"/>
    <property type="match status" value="1"/>
</dbReference>
<gene>
    <name evidence="1" type="primary">rpoZ</name>
    <name type="ordered locus">PFL_6062</name>
</gene>